<feature type="signal peptide" evidence="1">
    <location>
        <begin position="1"/>
        <end position="19"/>
    </location>
</feature>
<feature type="chain" id="PRO_0000036744" description="Spheroidin-like protein">
    <location>
        <begin position="20"/>
        <end position="302"/>
    </location>
</feature>
<feature type="glycosylation site" description="N-linked (GlcNAc...) asparagine; by host" evidence="1">
    <location>
        <position position="193"/>
    </location>
</feature>
<feature type="glycosylation site" description="N-linked (GlcNAc...) asparagine; by host" evidence="1">
    <location>
        <position position="293"/>
    </location>
</feature>
<comment type="function">
    <text evidence="2">Component of the virus occlusion bodies, which are large proteinaceous structures (polyhedra), that protect the virus from the outside environment for extended periods until they are ingested by insect larvae.</text>
</comment>
<comment type="subunit">
    <text>Homodimer; disulfide-linked.</text>
</comment>
<comment type="subcellular location">
    <subcellularLocation>
        <location>Host membrane</location>
    </subcellularLocation>
    <text>Occlusion body. Associated with the periphery of occlusion bodies and with the internal membranes of infected cells.</text>
</comment>
<comment type="developmental stage">
    <text>Very late phase of infection.</text>
</comment>
<protein>
    <recommendedName>
        <fullName>Spheroidin-like protein</fullName>
    </recommendedName>
    <alternativeName>
        <fullName>37 kDa glycoprotein</fullName>
    </alternativeName>
    <alternativeName>
        <fullName>Spindolin-like protein</fullName>
    </alternativeName>
</protein>
<proteinExistence type="evidence at transcript level"/>
<organism>
    <name type="scientific">Autographa californica nuclear polyhedrosis virus</name>
    <name type="common">AcMNPV</name>
    <dbReference type="NCBI Taxonomy" id="46015"/>
    <lineage>
        <taxon>Viruses</taxon>
        <taxon>Viruses incertae sedis</taxon>
        <taxon>Naldaviricetes</taxon>
        <taxon>Lefavirales</taxon>
        <taxon>Baculoviridae</taxon>
        <taxon>Alphabaculovirus</taxon>
        <taxon>Alphabaculovirus aucalifornicae</taxon>
    </lineage>
</organism>
<name>SPLR_NPVAC</name>
<reference key="1">
    <citation type="journal article" date="1989" name="J. Gen. Virol.">
        <title>Sequence, transcription and translation of a late gene of the Autographa californica nuclear polyhedrosis virus encoding a 34.8K polypeptide.</title>
        <authorList>
            <person name="Wu J.G."/>
            <person name="Miller L.K."/>
        </authorList>
    </citation>
    <scope>NUCLEOTIDE SEQUENCE [GENOMIC DNA]</scope>
    <source>
        <strain>L1</strain>
    </source>
</reference>
<reference key="2">
    <citation type="journal article" date="1990" name="J. Virol.">
        <title>Identification and characterization of a baculovirus occlusion body glycoprotein which resembles spheroidin, an entomopoxvirus protein.</title>
        <authorList>
            <person name="Vialard J.E."/>
            <person name="Yuen L."/>
            <person name="Richardson C.D."/>
        </authorList>
    </citation>
    <scope>NUCLEOTIDE SEQUENCE [GENOMIC DNA]</scope>
    <scope>FUNCTION</scope>
</reference>
<reference key="3">
    <citation type="journal article" date="1994" name="Virology">
        <title>The complete DNA sequence of Autographa californica nuclear polyhedrosis virus.</title>
        <authorList>
            <person name="Ayres M.D."/>
            <person name="Howard S.C."/>
            <person name="Kuzio J."/>
            <person name="Lopez-Ferber M."/>
            <person name="Possee R.D."/>
        </authorList>
    </citation>
    <scope>NUCLEOTIDE SEQUENCE [LARGE SCALE GENOMIC DNA]</scope>
    <source>
        <strain>C6</strain>
    </source>
</reference>
<gene>
    <name type="primary">SLP</name>
    <name type="synonym">GP37</name>
    <name type="ORF">ORF64</name>
</gene>
<evidence type="ECO:0000255" key="1"/>
<evidence type="ECO:0000269" key="2">
    <source>
    </source>
</evidence>
<organismHost>
    <name type="scientific">Lepidoptera</name>
    <name type="common">butterflies and moths</name>
    <dbReference type="NCBI Taxonomy" id="7088"/>
</organismHost>
<dbReference type="EMBL" id="D00583">
    <property type="protein sequence ID" value="BAA00461.1"/>
    <property type="molecule type" value="Genomic_DNA"/>
</dbReference>
<dbReference type="EMBL" id="L22858">
    <property type="protein sequence ID" value="AAA66694.1"/>
    <property type="molecule type" value="Genomic_DNA"/>
</dbReference>
<dbReference type="PIR" id="A34036">
    <property type="entry name" value="WMNV34"/>
</dbReference>
<dbReference type="SMR" id="P23058"/>
<dbReference type="CAZy" id="AA10">
    <property type="family name" value="Auxiliary Activities 10"/>
</dbReference>
<dbReference type="GlyCosmos" id="P23058">
    <property type="glycosylation" value="2 sites, No reported glycans"/>
</dbReference>
<dbReference type="KEGG" id="vg:1403897"/>
<dbReference type="OrthoDB" id="8547at10239"/>
<dbReference type="Proteomes" id="UP000008292">
    <property type="component" value="Segment"/>
</dbReference>
<dbReference type="GO" id="GO:0033644">
    <property type="term" value="C:host cell membrane"/>
    <property type="evidence" value="ECO:0007669"/>
    <property type="project" value="UniProtKB-SubCell"/>
</dbReference>
<dbReference type="GO" id="GO:0016020">
    <property type="term" value="C:membrane"/>
    <property type="evidence" value="ECO:0007669"/>
    <property type="project" value="UniProtKB-KW"/>
</dbReference>
<dbReference type="GO" id="GO:0039679">
    <property type="term" value="C:viral occlusion body"/>
    <property type="evidence" value="ECO:0007669"/>
    <property type="project" value="UniProtKB-KW"/>
</dbReference>
<dbReference type="CDD" id="cd21178">
    <property type="entry name" value="Fusolin-like"/>
    <property type="match status" value="1"/>
</dbReference>
<dbReference type="Gene3D" id="2.70.50.50">
    <property type="entry name" value="chitin-binding protein cbp21"/>
    <property type="match status" value="1"/>
</dbReference>
<dbReference type="InterPro" id="IPR004302">
    <property type="entry name" value="Cellulose/chitin-bd_N"/>
</dbReference>
<dbReference type="InterPro" id="IPR051024">
    <property type="entry name" value="GlcNAc_Chitin_IntDeg"/>
</dbReference>
<dbReference type="InterPro" id="IPR014756">
    <property type="entry name" value="Ig_E-set"/>
</dbReference>
<dbReference type="PANTHER" id="PTHR34823:SF1">
    <property type="entry name" value="CHITIN-BINDING TYPE-4 DOMAIN-CONTAINING PROTEIN"/>
    <property type="match status" value="1"/>
</dbReference>
<dbReference type="PANTHER" id="PTHR34823">
    <property type="entry name" value="GLCNAC-BINDING PROTEIN A"/>
    <property type="match status" value="1"/>
</dbReference>
<dbReference type="Pfam" id="PF03067">
    <property type="entry name" value="LPMO_10"/>
    <property type="match status" value="1"/>
</dbReference>
<dbReference type="SUPFAM" id="SSF81296">
    <property type="entry name" value="E set domains"/>
    <property type="match status" value="1"/>
</dbReference>
<accession>P23058</accession>
<sequence>MIALLIALFAAIHAPAVRSHGYLSVPTARQYKCFKDGNFYWPDNGDNIPDAACRNAYKSVYYKYRALDLESGAAASTAQYMFQQYMEYAAVAGPNYDDFDLIKQRVVPHTLCGAGSNDRNSVFGDKSGMDEPFNNWRPNTLYLNRYQPVYQMNVHFCPTAIHEPSYFEVFITKSNWDRRNPITWNELEYIGGNDSNLIPNPGDSLCDNSLVYSIPVVIPYRSNQFVMYVRWQRIDPVGEGFYNCADLVFETLDDECRYAQMAKVVRSQLQKHKLDARIDHNDEESCWRARKSNYSSFFNPGF</sequence>
<keyword id="KW-1015">Disulfide bond</keyword>
<keyword id="KW-0325">Glycoprotein</keyword>
<keyword id="KW-1043">Host membrane</keyword>
<keyword id="KW-0426">Late protein</keyword>
<keyword id="KW-0472">Membrane</keyword>
<keyword id="KW-1185">Reference proteome</keyword>
<keyword id="KW-0732">Signal</keyword>
<keyword id="KW-0842">Viral occlusion body</keyword>